<comment type="function">
    <text evidence="1">Member of a network of 50S ribosomal subunit biogenesis factors which assembles along the 30S-50S interface, preventing incorrect 23S rRNA structures from forming. Promotes peptidyl transferase center (PTC) maturation.</text>
</comment>
<comment type="subcellular location">
    <subcellularLocation>
        <location evidence="1">Cytoplasm</location>
    </subcellularLocation>
    <text evidence="1">Associates with late stage pre-50S ribosomal subunits.</text>
</comment>
<comment type="similarity">
    <text evidence="1">Belongs to the DarP family.</text>
</comment>
<accession>B7NGG7</accession>
<reference key="1">
    <citation type="journal article" date="2009" name="PLoS Genet.">
        <title>Organised genome dynamics in the Escherichia coli species results in highly diverse adaptive paths.</title>
        <authorList>
            <person name="Touchon M."/>
            <person name="Hoede C."/>
            <person name="Tenaillon O."/>
            <person name="Barbe V."/>
            <person name="Baeriswyl S."/>
            <person name="Bidet P."/>
            <person name="Bingen E."/>
            <person name="Bonacorsi S."/>
            <person name="Bouchier C."/>
            <person name="Bouvet O."/>
            <person name="Calteau A."/>
            <person name="Chiapello H."/>
            <person name="Clermont O."/>
            <person name="Cruveiller S."/>
            <person name="Danchin A."/>
            <person name="Diard M."/>
            <person name="Dossat C."/>
            <person name="Karoui M.E."/>
            <person name="Frapy E."/>
            <person name="Garry L."/>
            <person name="Ghigo J.M."/>
            <person name="Gilles A.M."/>
            <person name="Johnson J."/>
            <person name="Le Bouguenec C."/>
            <person name="Lescat M."/>
            <person name="Mangenot S."/>
            <person name="Martinez-Jehanne V."/>
            <person name="Matic I."/>
            <person name="Nassif X."/>
            <person name="Oztas S."/>
            <person name="Petit M.A."/>
            <person name="Pichon C."/>
            <person name="Rouy Z."/>
            <person name="Ruf C.S."/>
            <person name="Schneider D."/>
            <person name="Tourret J."/>
            <person name="Vacherie B."/>
            <person name="Vallenet D."/>
            <person name="Medigue C."/>
            <person name="Rocha E.P.C."/>
            <person name="Denamur E."/>
        </authorList>
    </citation>
    <scope>NUCLEOTIDE SEQUENCE [LARGE SCALE GENOMIC DNA]</scope>
    <source>
        <strain>UMN026 / ExPEC</strain>
    </source>
</reference>
<feature type="chain" id="PRO_1000198382" description="Dual-action ribosomal maturation protein DarP">
    <location>
        <begin position="1"/>
        <end position="183"/>
    </location>
</feature>
<name>DARP_ECOLU</name>
<proteinExistence type="inferred from homology"/>
<protein>
    <recommendedName>
        <fullName evidence="1">Dual-action ribosomal maturation protein DarP</fullName>
    </recommendedName>
    <alternativeName>
        <fullName evidence="1">Large ribosomal subunit assembly factor DarP</fullName>
    </alternativeName>
</protein>
<dbReference type="EMBL" id="CU928163">
    <property type="protein sequence ID" value="CAR15879.1"/>
    <property type="molecule type" value="Genomic_DNA"/>
</dbReference>
<dbReference type="RefSeq" id="YP_002415362.1">
    <property type="nucleotide sequence ID" value="NC_011751.1"/>
</dbReference>
<dbReference type="SMR" id="B7NGG7"/>
<dbReference type="STRING" id="585056.ECUMN_4767"/>
<dbReference type="KEGG" id="eum:ECUMN_4767"/>
<dbReference type="PATRIC" id="fig|585056.7.peg.4931"/>
<dbReference type="HOGENOM" id="CLU_106757_2_0_6"/>
<dbReference type="Proteomes" id="UP000007097">
    <property type="component" value="Chromosome"/>
</dbReference>
<dbReference type="GO" id="GO:0005829">
    <property type="term" value="C:cytosol"/>
    <property type="evidence" value="ECO:0007669"/>
    <property type="project" value="TreeGrafter"/>
</dbReference>
<dbReference type="GO" id="GO:0043022">
    <property type="term" value="F:ribosome binding"/>
    <property type="evidence" value="ECO:0007669"/>
    <property type="project" value="UniProtKB-UniRule"/>
</dbReference>
<dbReference type="GO" id="GO:0019843">
    <property type="term" value="F:rRNA binding"/>
    <property type="evidence" value="ECO:0007669"/>
    <property type="project" value="UniProtKB-UniRule"/>
</dbReference>
<dbReference type="GO" id="GO:1902626">
    <property type="term" value="P:assembly of large subunit precursor of preribosome"/>
    <property type="evidence" value="ECO:0007669"/>
    <property type="project" value="UniProtKB-UniRule"/>
</dbReference>
<dbReference type="CDD" id="cd16331">
    <property type="entry name" value="YjgA-like"/>
    <property type="match status" value="1"/>
</dbReference>
<dbReference type="FunFam" id="1.10.60.30:FF:000001">
    <property type="entry name" value="UPF0307 protein YjgA"/>
    <property type="match status" value="1"/>
</dbReference>
<dbReference type="FunFam" id="1.10.60.30:FF:000002">
    <property type="entry name" value="UPF0307 protein YjgA"/>
    <property type="match status" value="1"/>
</dbReference>
<dbReference type="Gene3D" id="1.10.60.30">
    <property type="entry name" value="PSPTO4464-like domains"/>
    <property type="match status" value="2"/>
</dbReference>
<dbReference type="HAMAP" id="MF_00765">
    <property type="entry name" value="DarP"/>
    <property type="match status" value="1"/>
</dbReference>
<dbReference type="InterPro" id="IPR006839">
    <property type="entry name" value="DarP"/>
</dbReference>
<dbReference type="InterPro" id="IPR023153">
    <property type="entry name" value="DarP_sf"/>
</dbReference>
<dbReference type="NCBIfam" id="NF003593">
    <property type="entry name" value="PRK05255.1-1"/>
    <property type="match status" value="1"/>
</dbReference>
<dbReference type="PANTHER" id="PTHR38101">
    <property type="entry name" value="UPF0307 PROTEIN YJGA"/>
    <property type="match status" value="1"/>
</dbReference>
<dbReference type="PANTHER" id="PTHR38101:SF1">
    <property type="entry name" value="UPF0307 PROTEIN YJGA"/>
    <property type="match status" value="1"/>
</dbReference>
<dbReference type="Pfam" id="PF04751">
    <property type="entry name" value="DarP"/>
    <property type="match status" value="1"/>
</dbReference>
<dbReference type="PIRSF" id="PIRSF016183">
    <property type="entry name" value="UCP016183"/>
    <property type="match status" value="1"/>
</dbReference>
<dbReference type="SUPFAM" id="SSF158710">
    <property type="entry name" value="PSPTO4464-like"/>
    <property type="match status" value="1"/>
</dbReference>
<organism>
    <name type="scientific">Escherichia coli O17:K52:H18 (strain UMN026 / ExPEC)</name>
    <dbReference type="NCBI Taxonomy" id="585056"/>
    <lineage>
        <taxon>Bacteria</taxon>
        <taxon>Pseudomonadati</taxon>
        <taxon>Pseudomonadota</taxon>
        <taxon>Gammaproteobacteria</taxon>
        <taxon>Enterobacterales</taxon>
        <taxon>Enterobacteriaceae</taxon>
        <taxon>Escherichia</taxon>
    </lineage>
</organism>
<sequence>MTKQPEDWLDDVPGDDIEDEDDEIIWVSKSEIKRDAEELKRLGAEIVDLGKNALDKIPLDADLRAAIELAQRIKMEGRRRQLQLIGKMLRQRDVEPIRQALDKLKNRHNQQVVLFHKLENLRDRLIDQGDDAIAEVLNLWPDADRQQLRTLIRNAKKEKEGNKPPKSARQIFQYLRELAENEG</sequence>
<keyword id="KW-0963">Cytoplasm</keyword>
<keyword id="KW-0690">Ribosome biogenesis</keyword>
<keyword id="KW-0694">RNA-binding</keyword>
<keyword id="KW-0699">rRNA-binding</keyword>
<gene>
    <name evidence="1" type="primary">darP</name>
    <name type="ordered locus">ECUMN_4767</name>
</gene>
<evidence type="ECO:0000255" key="1">
    <source>
        <dbReference type="HAMAP-Rule" id="MF_00765"/>
    </source>
</evidence>